<dbReference type="EMBL" id="AL590842">
    <property type="protein sequence ID" value="CAL22020.1"/>
    <property type="molecule type" value="Genomic_DNA"/>
</dbReference>
<dbReference type="EMBL" id="AE009952">
    <property type="protein sequence ID" value="AAM84343.1"/>
    <property type="molecule type" value="Genomic_DNA"/>
</dbReference>
<dbReference type="EMBL" id="AE017042">
    <property type="protein sequence ID" value="AAS60529.1"/>
    <property type="molecule type" value="Genomic_DNA"/>
</dbReference>
<dbReference type="PIR" id="AI0416">
    <property type="entry name" value="AI0416"/>
</dbReference>
<dbReference type="RefSeq" id="WP_002209318.1">
    <property type="nucleotide sequence ID" value="NZ_WUCM01000091.1"/>
</dbReference>
<dbReference type="RefSeq" id="YP_002348323.1">
    <property type="nucleotide sequence ID" value="NC_003143.1"/>
</dbReference>
<dbReference type="SMR" id="Q8ZBH9"/>
<dbReference type="STRING" id="214092.YPO3431"/>
<dbReference type="PaxDb" id="214092-YPO3431"/>
<dbReference type="DNASU" id="1145703"/>
<dbReference type="EnsemblBacteria" id="AAS60529">
    <property type="protein sequence ID" value="AAS60529"/>
    <property type="gene ID" value="YP_0253"/>
</dbReference>
<dbReference type="GeneID" id="57975279"/>
<dbReference type="KEGG" id="ype:YPO3431"/>
<dbReference type="KEGG" id="ypk:y0756"/>
<dbReference type="KEGG" id="ypm:YP_0253"/>
<dbReference type="PATRIC" id="fig|214092.21.peg.3920"/>
<dbReference type="eggNOG" id="COG4582">
    <property type="taxonomic scope" value="Bacteria"/>
</dbReference>
<dbReference type="HOGENOM" id="CLU_076303_0_0_6"/>
<dbReference type="OMA" id="LPAYYAW"/>
<dbReference type="OrthoDB" id="5294622at2"/>
<dbReference type="Proteomes" id="UP000000815">
    <property type="component" value="Chromosome"/>
</dbReference>
<dbReference type="Proteomes" id="UP000001019">
    <property type="component" value="Chromosome"/>
</dbReference>
<dbReference type="Proteomes" id="UP000002490">
    <property type="component" value="Chromosome"/>
</dbReference>
<dbReference type="GO" id="GO:0032153">
    <property type="term" value="C:cell division site"/>
    <property type="evidence" value="ECO:0000318"/>
    <property type="project" value="GO_Central"/>
</dbReference>
<dbReference type="GO" id="GO:0005737">
    <property type="term" value="C:cytoplasm"/>
    <property type="evidence" value="ECO:0007669"/>
    <property type="project" value="UniProtKB-SubCell"/>
</dbReference>
<dbReference type="GO" id="GO:0000917">
    <property type="term" value="P:division septum assembly"/>
    <property type="evidence" value="ECO:0007669"/>
    <property type="project" value="UniProtKB-KW"/>
</dbReference>
<dbReference type="GO" id="GO:0043093">
    <property type="term" value="P:FtsZ-dependent cytokinesis"/>
    <property type="evidence" value="ECO:0000318"/>
    <property type="project" value="GO_Central"/>
</dbReference>
<dbReference type="FunFam" id="1.10.3900.10:FF:000001">
    <property type="entry name" value="Cell division protein ZapD"/>
    <property type="match status" value="1"/>
</dbReference>
<dbReference type="FunFam" id="2.60.440.10:FF:000001">
    <property type="entry name" value="Cell division protein ZapD"/>
    <property type="match status" value="1"/>
</dbReference>
<dbReference type="Gene3D" id="1.10.3900.10">
    <property type="entry name" value="YacF-like"/>
    <property type="match status" value="1"/>
</dbReference>
<dbReference type="Gene3D" id="2.60.440.10">
    <property type="entry name" value="YacF-like domains"/>
    <property type="match status" value="1"/>
</dbReference>
<dbReference type="HAMAP" id="MF_01092">
    <property type="entry name" value="ZapD"/>
    <property type="match status" value="1"/>
</dbReference>
<dbReference type="InterPro" id="IPR009777">
    <property type="entry name" value="ZapD"/>
</dbReference>
<dbReference type="InterPro" id="IPR027462">
    <property type="entry name" value="ZapD_C"/>
</dbReference>
<dbReference type="InterPro" id="IPR036268">
    <property type="entry name" value="ZapD_sf"/>
</dbReference>
<dbReference type="NCBIfam" id="NF003653">
    <property type="entry name" value="PRK05287.1-1"/>
    <property type="match status" value="1"/>
</dbReference>
<dbReference type="NCBIfam" id="NF003655">
    <property type="entry name" value="PRK05287.1-3"/>
    <property type="match status" value="1"/>
</dbReference>
<dbReference type="PANTHER" id="PTHR39455">
    <property type="entry name" value="CELL DIVISION PROTEIN ZAPD"/>
    <property type="match status" value="1"/>
</dbReference>
<dbReference type="PANTHER" id="PTHR39455:SF1">
    <property type="entry name" value="CELL DIVISION PROTEIN ZAPD"/>
    <property type="match status" value="1"/>
</dbReference>
<dbReference type="Pfam" id="PF07072">
    <property type="entry name" value="ZapD"/>
    <property type="match status" value="1"/>
</dbReference>
<dbReference type="SUPFAM" id="SSF160950">
    <property type="entry name" value="YacF-like"/>
    <property type="match status" value="1"/>
</dbReference>
<organism>
    <name type="scientific">Yersinia pestis</name>
    <dbReference type="NCBI Taxonomy" id="632"/>
    <lineage>
        <taxon>Bacteria</taxon>
        <taxon>Pseudomonadati</taxon>
        <taxon>Pseudomonadota</taxon>
        <taxon>Gammaproteobacteria</taxon>
        <taxon>Enterobacterales</taxon>
        <taxon>Yersiniaceae</taxon>
        <taxon>Yersinia</taxon>
    </lineage>
</organism>
<name>ZAPD_YERPE</name>
<feature type="chain" id="PRO_0000211687" description="Cell division protein ZapD">
    <location>
        <begin position="1"/>
        <end position="250"/>
    </location>
</feature>
<proteinExistence type="inferred from homology"/>
<protein>
    <recommendedName>
        <fullName evidence="1">Cell division protein ZapD</fullName>
    </recommendedName>
    <alternativeName>
        <fullName evidence="1">Z ring-associated protein D</fullName>
    </alternativeName>
</protein>
<evidence type="ECO:0000255" key="1">
    <source>
        <dbReference type="HAMAP-Rule" id="MF_01092"/>
    </source>
</evidence>
<accession>Q8ZBH9</accession>
<accession>Q0WBL5</accession>
<sequence>MSDLTSTILFEHPLNEKMRTWLRMEFLLQQLESHRSLDNIANALTFFRTASDLIDVLERGEVRTDLLKELERQQQKLQQWADIPGVDVSLVDSLRNQLKSRAAVLMSAPRIGQSLKEDRLISVVRQRLSIPGGCCSFDLPTLHVWLHQPSEQRDQHINKLLASLAPLHQSLTIILDLIRQSCPLRSQISLNGFFQDNAGGADLLRLRLPLDPQLYPQISGHKTRYAIRFLALDSENGTVPARLSFELACC</sequence>
<reference key="1">
    <citation type="journal article" date="2001" name="Nature">
        <title>Genome sequence of Yersinia pestis, the causative agent of plague.</title>
        <authorList>
            <person name="Parkhill J."/>
            <person name="Wren B.W."/>
            <person name="Thomson N.R."/>
            <person name="Titball R.W."/>
            <person name="Holden M.T.G."/>
            <person name="Prentice M.B."/>
            <person name="Sebaihia M."/>
            <person name="James K.D."/>
            <person name="Churcher C.M."/>
            <person name="Mungall K.L."/>
            <person name="Baker S."/>
            <person name="Basham D."/>
            <person name="Bentley S.D."/>
            <person name="Brooks K."/>
            <person name="Cerdeno-Tarraga A.-M."/>
            <person name="Chillingworth T."/>
            <person name="Cronin A."/>
            <person name="Davies R.M."/>
            <person name="Davis P."/>
            <person name="Dougan G."/>
            <person name="Feltwell T."/>
            <person name="Hamlin N."/>
            <person name="Holroyd S."/>
            <person name="Jagels K."/>
            <person name="Karlyshev A.V."/>
            <person name="Leather S."/>
            <person name="Moule S."/>
            <person name="Oyston P.C.F."/>
            <person name="Quail M.A."/>
            <person name="Rutherford K.M."/>
            <person name="Simmonds M."/>
            <person name="Skelton J."/>
            <person name="Stevens K."/>
            <person name="Whitehead S."/>
            <person name="Barrell B.G."/>
        </authorList>
    </citation>
    <scope>NUCLEOTIDE SEQUENCE [LARGE SCALE GENOMIC DNA]</scope>
    <source>
        <strain>CO-92 / Biovar Orientalis</strain>
    </source>
</reference>
<reference key="2">
    <citation type="journal article" date="2002" name="J. Bacteriol.">
        <title>Genome sequence of Yersinia pestis KIM.</title>
        <authorList>
            <person name="Deng W."/>
            <person name="Burland V."/>
            <person name="Plunkett G. III"/>
            <person name="Boutin A."/>
            <person name="Mayhew G.F."/>
            <person name="Liss P."/>
            <person name="Perna N.T."/>
            <person name="Rose D.J."/>
            <person name="Mau B."/>
            <person name="Zhou S."/>
            <person name="Schwartz D.C."/>
            <person name="Fetherston J.D."/>
            <person name="Lindler L.E."/>
            <person name="Brubaker R.R."/>
            <person name="Plano G.V."/>
            <person name="Straley S.C."/>
            <person name="McDonough K.A."/>
            <person name="Nilles M.L."/>
            <person name="Matson J.S."/>
            <person name="Blattner F.R."/>
            <person name="Perry R.D."/>
        </authorList>
    </citation>
    <scope>NUCLEOTIDE SEQUENCE [LARGE SCALE GENOMIC DNA]</scope>
    <source>
        <strain>KIM10+ / Biovar Mediaevalis</strain>
    </source>
</reference>
<reference key="3">
    <citation type="journal article" date="2004" name="DNA Res.">
        <title>Complete genome sequence of Yersinia pestis strain 91001, an isolate avirulent to humans.</title>
        <authorList>
            <person name="Song Y."/>
            <person name="Tong Z."/>
            <person name="Wang J."/>
            <person name="Wang L."/>
            <person name="Guo Z."/>
            <person name="Han Y."/>
            <person name="Zhang J."/>
            <person name="Pei D."/>
            <person name="Zhou D."/>
            <person name="Qin H."/>
            <person name="Pang X."/>
            <person name="Han Y."/>
            <person name="Zhai J."/>
            <person name="Li M."/>
            <person name="Cui B."/>
            <person name="Qi Z."/>
            <person name="Jin L."/>
            <person name="Dai R."/>
            <person name="Chen F."/>
            <person name="Li S."/>
            <person name="Ye C."/>
            <person name="Du Z."/>
            <person name="Lin W."/>
            <person name="Wang J."/>
            <person name="Yu J."/>
            <person name="Yang H."/>
            <person name="Wang J."/>
            <person name="Huang P."/>
            <person name="Yang R."/>
        </authorList>
    </citation>
    <scope>NUCLEOTIDE SEQUENCE [LARGE SCALE GENOMIC DNA]</scope>
    <source>
        <strain>91001 / Biovar Mediaevalis</strain>
    </source>
</reference>
<gene>
    <name evidence="1" type="primary">zapD</name>
    <name type="ordered locus">YPO3431</name>
    <name type="ordered locus">y0756</name>
    <name type="ordered locus">YP_0253</name>
</gene>
<keyword id="KW-0131">Cell cycle</keyword>
<keyword id="KW-0132">Cell division</keyword>
<keyword id="KW-0963">Cytoplasm</keyword>
<keyword id="KW-1185">Reference proteome</keyword>
<keyword id="KW-0717">Septation</keyword>
<comment type="function">
    <text evidence="1">Cell division factor that enhances FtsZ-ring assembly. Directly interacts with FtsZ and promotes bundling of FtsZ protofilaments, with a reduction in FtsZ GTPase activity.</text>
</comment>
<comment type="subunit">
    <text evidence="1">Interacts with FtsZ.</text>
</comment>
<comment type="subcellular location">
    <subcellularLocation>
        <location evidence="1">Cytoplasm</location>
    </subcellularLocation>
    <text evidence="1">Localizes to mid-cell in an FtsZ-dependent manner.</text>
</comment>
<comment type="similarity">
    <text evidence="1">Belongs to the ZapD family.</text>
</comment>